<name>FOLD_ALKEH</name>
<gene>
    <name evidence="1" type="primary">folD</name>
    <name type="ordered locus">Mlg_0591</name>
</gene>
<accession>Q0AB42</accession>
<reference key="1">
    <citation type="submission" date="2006-08" db="EMBL/GenBank/DDBJ databases">
        <title>Complete sequence of Alkalilimnicola ehrilichei MLHE-1.</title>
        <authorList>
            <person name="Copeland A."/>
            <person name="Lucas S."/>
            <person name="Lapidus A."/>
            <person name="Barry K."/>
            <person name="Detter J.C."/>
            <person name="Glavina del Rio T."/>
            <person name="Hammon N."/>
            <person name="Israni S."/>
            <person name="Dalin E."/>
            <person name="Tice H."/>
            <person name="Pitluck S."/>
            <person name="Sims D."/>
            <person name="Brettin T."/>
            <person name="Bruce D."/>
            <person name="Han C."/>
            <person name="Tapia R."/>
            <person name="Gilna P."/>
            <person name="Schmutz J."/>
            <person name="Larimer F."/>
            <person name="Land M."/>
            <person name="Hauser L."/>
            <person name="Kyrpides N."/>
            <person name="Mikhailova N."/>
            <person name="Oremland R.S."/>
            <person name="Hoeft S.E."/>
            <person name="Switzer-Blum J."/>
            <person name="Kulp T."/>
            <person name="King G."/>
            <person name="Tabita R."/>
            <person name="Witte B."/>
            <person name="Santini J.M."/>
            <person name="Basu P."/>
            <person name="Hollibaugh J.T."/>
            <person name="Xie G."/>
            <person name="Stolz J.F."/>
            <person name="Richardson P."/>
        </authorList>
    </citation>
    <scope>NUCLEOTIDE SEQUENCE [LARGE SCALE GENOMIC DNA]</scope>
    <source>
        <strain>ATCC BAA-1101 / DSM 17681 / MLHE-1</strain>
    </source>
</reference>
<sequence>MSAQILDGKAIAAELREQVRKQVEARVERGGRRPGLAVVLVGADPASTVYVGKKRQACEQLGMHSSAHELPAETTQDELLALVDELNGRDEIDGILVQLPLPDHIDEQTVIDRIHPDKDVDGFHPVNMGRLTLRLPGLRPCTPNGVMTMLAHAGIELEGKDAVIIGQSNIVGRPMAMELLNARCTITICHSRTRNLADRVRAADIVVAAVGRPGFVPGDWIKPGAVVIDVGINRLESGKLTGDVDFAAARELAGWITPVPGGVGPMTVATLMANTLAAAEARDSRA</sequence>
<organism>
    <name type="scientific">Alkalilimnicola ehrlichii (strain ATCC BAA-1101 / DSM 17681 / MLHE-1)</name>
    <dbReference type="NCBI Taxonomy" id="187272"/>
    <lineage>
        <taxon>Bacteria</taxon>
        <taxon>Pseudomonadati</taxon>
        <taxon>Pseudomonadota</taxon>
        <taxon>Gammaproteobacteria</taxon>
        <taxon>Chromatiales</taxon>
        <taxon>Ectothiorhodospiraceae</taxon>
        <taxon>Alkalilimnicola</taxon>
    </lineage>
</organism>
<feature type="chain" id="PRO_0000268256" description="Bifunctional protein FolD">
    <location>
        <begin position="1"/>
        <end position="286"/>
    </location>
</feature>
<feature type="binding site" evidence="1">
    <location>
        <begin position="166"/>
        <end position="168"/>
    </location>
    <ligand>
        <name>NADP(+)</name>
        <dbReference type="ChEBI" id="CHEBI:58349"/>
    </ligand>
</feature>
<feature type="binding site" evidence="1">
    <location>
        <position position="191"/>
    </location>
    <ligand>
        <name>NADP(+)</name>
        <dbReference type="ChEBI" id="CHEBI:58349"/>
    </ligand>
</feature>
<feature type="binding site" evidence="1">
    <location>
        <position position="232"/>
    </location>
    <ligand>
        <name>NADP(+)</name>
        <dbReference type="ChEBI" id="CHEBI:58349"/>
    </ligand>
</feature>
<protein>
    <recommendedName>
        <fullName evidence="1">Bifunctional protein FolD</fullName>
    </recommendedName>
    <domain>
        <recommendedName>
            <fullName evidence="1">Methylenetetrahydrofolate dehydrogenase</fullName>
            <ecNumber evidence="1">1.5.1.5</ecNumber>
        </recommendedName>
    </domain>
    <domain>
        <recommendedName>
            <fullName evidence="1">Methenyltetrahydrofolate cyclohydrolase</fullName>
            <ecNumber evidence="1">3.5.4.9</ecNumber>
        </recommendedName>
    </domain>
</protein>
<comment type="function">
    <text evidence="1">Catalyzes the oxidation of 5,10-methylenetetrahydrofolate to 5,10-methenyltetrahydrofolate and then the hydrolysis of 5,10-methenyltetrahydrofolate to 10-formyltetrahydrofolate.</text>
</comment>
<comment type="catalytic activity">
    <reaction evidence="1">
        <text>(6R)-5,10-methylene-5,6,7,8-tetrahydrofolate + NADP(+) = (6R)-5,10-methenyltetrahydrofolate + NADPH</text>
        <dbReference type="Rhea" id="RHEA:22812"/>
        <dbReference type="ChEBI" id="CHEBI:15636"/>
        <dbReference type="ChEBI" id="CHEBI:57455"/>
        <dbReference type="ChEBI" id="CHEBI:57783"/>
        <dbReference type="ChEBI" id="CHEBI:58349"/>
        <dbReference type="EC" id="1.5.1.5"/>
    </reaction>
</comment>
<comment type="catalytic activity">
    <reaction evidence="1">
        <text>(6R)-5,10-methenyltetrahydrofolate + H2O = (6R)-10-formyltetrahydrofolate + H(+)</text>
        <dbReference type="Rhea" id="RHEA:23700"/>
        <dbReference type="ChEBI" id="CHEBI:15377"/>
        <dbReference type="ChEBI" id="CHEBI:15378"/>
        <dbReference type="ChEBI" id="CHEBI:57455"/>
        <dbReference type="ChEBI" id="CHEBI:195366"/>
        <dbReference type="EC" id="3.5.4.9"/>
    </reaction>
</comment>
<comment type="pathway">
    <text evidence="1">One-carbon metabolism; tetrahydrofolate interconversion.</text>
</comment>
<comment type="subunit">
    <text evidence="1">Homodimer.</text>
</comment>
<comment type="similarity">
    <text evidence="1">Belongs to the tetrahydrofolate dehydrogenase/cyclohydrolase family.</text>
</comment>
<keyword id="KW-0028">Amino-acid biosynthesis</keyword>
<keyword id="KW-0368">Histidine biosynthesis</keyword>
<keyword id="KW-0378">Hydrolase</keyword>
<keyword id="KW-0486">Methionine biosynthesis</keyword>
<keyword id="KW-0511">Multifunctional enzyme</keyword>
<keyword id="KW-0521">NADP</keyword>
<keyword id="KW-0554">One-carbon metabolism</keyword>
<keyword id="KW-0560">Oxidoreductase</keyword>
<keyword id="KW-0658">Purine biosynthesis</keyword>
<keyword id="KW-1185">Reference proteome</keyword>
<dbReference type="EC" id="1.5.1.5" evidence="1"/>
<dbReference type="EC" id="3.5.4.9" evidence="1"/>
<dbReference type="EMBL" id="CP000453">
    <property type="protein sequence ID" value="ABI55945.1"/>
    <property type="molecule type" value="Genomic_DNA"/>
</dbReference>
<dbReference type="RefSeq" id="WP_011628340.1">
    <property type="nucleotide sequence ID" value="NC_008340.1"/>
</dbReference>
<dbReference type="SMR" id="Q0AB42"/>
<dbReference type="KEGG" id="aeh:Mlg_0591"/>
<dbReference type="eggNOG" id="COG0190">
    <property type="taxonomic scope" value="Bacteria"/>
</dbReference>
<dbReference type="HOGENOM" id="CLU_034045_2_1_6"/>
<dbReference type="UniPathway" id="UPA00193"/>
<dbReference type="Proteomes" id="UP000001962">
    <property type="component" value="Chromosome"/>
</dbReference>
<dbReference type="GO" id="GO:0005829">
    <property type="term" value="C:cytosol"/>
    <property type="evidence" value="ECO:0007669"/>
    <property type="project" value="TreeGrafter"/>
</dbReference>
<dbReference type="GO" id="GO:0004477">
    <property type="term" value="F:methenyltetrahydrofolate cyclohydrolase activity"/>
    <property type="evidence" value="ECO:0007669"/>
    <property type="project" value="UniProtKB-UniRule"/>
</dbReference>
<dbReference type="GO" id="GO:0004488">
    <property type="term" value="F:methylenetetrahydrofolate dehydrogenase (NADP+) activity"/>
    <property type="evidence" value="ECO:0007669"/>
    <property type="project" value="UniProtKB-UniRule"/>
</dbReference>
<dbReference type="GO" id="GO:0000105">
    <property type="term" value="P:L-histidine biosynthetic process"/>
    <property type="evidence" value="ECO:0007669"/>
    <property type="project" value="UniProtKB-KW"/>
</dbReference>
<dbReference type="GO" id="GO:0009086">
    <property type="term" value="P:methionine biosynthetic process"/>
    <property type="evidence" value="ECO:0007669"/>
    <property type="project" value="UniProtKB-KW"/>
</dbReference>
<dbReference type="GO" id="GO:0006164">
    <property type="term" value="P:purine nucleotide biosynthetic process"/>
    <property type="evidence" value="ECO:0007669"/>
    <property type="project" value="UniProtKB-KW"/>
</dbReference>
<dbReference type="GO" id="GO:0035999">
    <property type="term" value="P:tetrahydrofolate interconversion"/>
    <property type="evidence" value="ECO:0007669"/>
    <property type="project" value="UniProtKB-UniRule"/>
</dbReference>
<dbReference type="CDD" id="cd01080">
    <property type="entry name" value="NAD_bind_m-THF_DH_Cyclohyd"/>
    <property type="match status" value="1"/>
</dbReference>
<dbReference type="FunFam" id="3.40.50.10860:FF:000001">
    <property type="entry name" value="Bifunctional protein FolD"/>
    <property type="match status" value="1"/>
</dbReference>
<dbReference type="FunFam" id="3.40.50.720:FF:000006">
    <property type="entry name" value="Bifunctional protein FolD"/>
    <property type="match status" value="1"/>
</dbReference>
<dbReference type="Gene3D" id="3.40.50.10860">
    <property type="entry name" value="Leucine Dehydrogenase, chain A, domain 1"/>
    <property type="match status" value="1"/>
</dbReference>
<dbReference type="Gene3D" id="3.40.50.720">
    <property type="entry name" value="NAD(P)-binding Rossmann-like Domain"/>
    <property type="match status" value="1"/>
</dbReference>
<dbReference type="HAMAP" id="MF_01576">
    <property type="entry name" value="THF_DHG_CYH"/>
    <property type="match status" value="1"/>
</dbReference>
<dbReference type="InterPro" id="IPR046346">
    <property type="entry name" value="Aminoacid_DH-like_N_sf"/>
</dbReference>
<dbReference type="InterPro" id="IPR036291">
    <property type="entry name" value="NAD(P)-bd_dom_sf"/>
</dbReference>
<dbReference type="InterPro" id="IPR000672">
    <property type="entry name" value="THF_DH/CycHdrlase"/>
</dbReference>
<dbReference type="InterPro" id="IPR020630">
    <property type="entry name" value="THF_DH/CycHdrlase_cat_dom"/>
</dbReference>
<dbReference type="InterPro" id="IPR020867">
    <property type="entry name" value="THF_DH/CycHdrlase_CS"/>
</dbReference>
<dbReference type="InterPro" id="IPR020631">
    <property type="entry name" value="THF_DH/CycHdrlase_NAD-bd_dom"/>
</dbReference>
<dbReference type="NCBIfam" id="NF008058">
    <property type="entry name" value="PRK10792.1"/>
    <property type="match status" value="1"/>
</dbReference>
<dbReference type="NCBIfam" id="NF010783">
    <property type="entry name" value="PRK14186.1"/>
    <property type="match status" value="1"/>
</dbReference>
<dbReference type="NCBIfam" id="NF010785">
    <property type="entry name" value="PRK14188.1"/>
    <property type="match status" value="1"/>
</dbReference>
<dbReference type="PANTHER" id="PTHR48099:SF5">
    <property type="entry name" value="C-1-TETRAHYDROFOLATE SYNTHASE, CYTOPLASMIC"/>
    <property type="match status" value="1"/>
</dbReference>
<dbReference type="PANTHER" id="PTHR48099">
    <property type="entry name" value="C-1-TETRAHYDROFOLATE SYNTHASE, CYTOPLASMIC-RELATED"/>
    <property type="match status" value="1"/>
</dbReference>
<dbReference type="Pfam" id="PF00763">
    <property type="entry name" value="THF_DHG_CYH"/>
    <property type="match status" value="1"/>
</dbReference>
<dbReference type="Pfam" id="PF02882">
    <property type="entry name" value="THF_DHG_CYH_C"/>
    <property type="match status" value="1"/>
</dbReference>
<dbReference type="PRINTS" id="PR00085">
    <property type="entry name" value="THFDHDRGNASE"/>
</dbReference>
<dbReference type="SUPFAM" id="SSF53223">
    <property type="entry name" value="Aminoacid dehydrogenase-like, N-terminal domain"/>
    <property type="match status" value="1"/>
</dbReference>
<dbReference type="SUPFAM" id="SSF51735">
    <property type="entry name" value="NAD(P)-binding Rossmann-fold domains"/>
    <property type="match status" value="1"/>
</dbReference>
<dbReference type="PROSITE" id="PS00767">
    <property type="entry name" value="THF_DHG_CYH_2"/>
    <property type="match status" value="1"/>
</dbReference>
<evidence type="ECO:0000255" key="1">
    <source>
        <dbReference type="HAMAP-Rule" id="MF_01576"/>
    </source>
</evidence>
<proteinExistence type="inferred from homology"/>